<name>XKR8_GASAC</name>
<accession>Q4VV71</accession>
<sequence length="404" mass="46385">MEGATFSKYSWIDFVFSVIGACTFLVDWGSDVWLAAEFYRRGDVTWFWVLVGLMALSSFVVQTFSWFWFQYDRELPGFRAQTEAAAVLLGDRAKLSCAVHVLQLGFLCRHISAIRQGFRVWWRKEKGSEYAIYQTHDLSMLRLIETFCESAPQLTLMIYVMLHTHKARAVQFVSIAASTTSIAWMVVDYHRSLRSFLPDKAKQGWGSSLIYFLWNLLLIAPRVAALALCASVLSGYMAAHFLMLWSAFALWAWRQGTHFMDSVAGEWLYRATVGLIWYFSWFNVKDGQTRSRSAIYHSFISTDGAILLATWWCHRDPVQTQSYALALLIALPLFHFLGLLFKALYYCCFHPKLWRPPARDPGLPNDLPDAQVSMRDFPIQDGGLSPKLLNKRMAGQVARFYSDE</sequence>
<evidence type="ECO:0000250" key="1">
    <source>
        <dbReference type="UniProtKB" id="Q9H6D3"/>
    </source>
</evidence>
<evidence type="ECO:0000255" key="2"/>
<evidence type="ECO:0000303" key="3">
    <source ref="1"/>
</evidence>
<evidence type="ECO:0000305" key="4"/>
<gene>
    <name evidence="1" type="primary">xkr8</name>
    <name evidence="3" type="synonym">xrg8</name>
</gene>
<comment type="function">
    <text evidence="1">Phospholipid scramblase that promotes phosphatidylserine exposure on apoptotic cell surface, possibly by mediating phospholipid scrambling. Phosphatidylserine is a specific marker only present at the surface of apoptotic cells and acts as a specific signal for engulfment.</text>
</comment>
<comment type="catalytic activity">
    <reaction evidence="1">
        <text>a 1,2-diacyl-sn-glycero-3-phospho-L-serine(in) = a 1,2-diacyl-sn-glycero-3-phospho-L-serine(out)</text>
        <dbReference type="Rhea" id="RHEA:38663"/>
        <dbReference type="ChEBI" id="CHEBI:57262"/>
    </reaction>
</comment>
<comment type="subcellular location">
    <subcellularLocation>
        <location evidence="1">Cell membrane</location>
        <topology evidence="2">Multi-pass membrane protein</topology>
    </subcellularLocation>
</comment>
<comment type="similarity">
    <text evidence="4">Belongs to the XK family.</text>
</comment>
<proteinExistence type="evidence at transcript level"/>
<organism>
    <name type="scientific">Gasterosteus aculeatus</name>
    <name type="common">Three-spined stickleback</name>
    <dbReference type="NCBI Taxonomy" id="69293"/>
    <lineage>
        <taxon>Eukaryota</taxon>
        <taxon>Metazoa</taxon>
        <taxon>Chordata</taxon>
        <taxon>Craniata</taxon>
        <taxon>Vertebrata</taxon>
        <taxon>Euteleostomi</taxon>
        <taxon>Actinopterygii</taxon>
        <taxon>Neopterygii</taxon>
        <taxon>Teleostei</taxon>
        <taxon>Neoteleostei</taxon>
        <taxon>Acanthomorphata</taxon>
        <taxon>Eupercaria</taxon>
        <taxon>Perciformes</taxon>
        <taxon>Cottioidei</taxon>
        <taxon>Gasterosteales</taxon>
        <taxon>Gasterosteidae</taxon>
        <taxon>Gasterosteus</taxon>
    </lineage>
</organism>
<reference key="1">
    <citation type="submission" date="2004-05" db="EMBL/GenBank/DDBJ databases">
        <title>A superfamily of XK-related genes (XRG) widely expressed in vertebrates and invertebrates.</title>
        <authorList>
            <person name="Huang C.-H."/>
            <person name="Chen Y."/>
        </authorList>
    </citation>
    <scope>NUCLEOTIDE SEQUENCE [MRNA]</scope>
</reference>
<protein>
    <recommendedName>
        <fullName evidence="4">XK-related protein 8</fullName>
    </recommendedName>
</protein>
<feature type="chain" id="PRO_0000190794" description="XK-related protein 8">
    <location>
        <begin position="1"/>
        <end position="404"/>
    </location>
</feature>
<feature type="transmembrane region" description="Helical" evidence="2">
    <location>
        <begin position="14"/>
        <end position="34"/>
    </location>
</feature>
<feature type="transmembrane region" description="Helical" evidence="2">
    <location>
        <begin position="44"/>
        <end position="64"/>
    </location>
</feature>
<feature type="transmembrane region" description="Helical" evidence="2">
    <location>
        <begin position="169"/>
        <end position="189"/>
    </location>
</feature>
<feature type="transmembrane region" description="Helical" evidence="2">
    <location>
        <begin position="209"/>
        <end position="229"/>
    </location>
</feature>
<feature type="transmembrane region" description="Helical" evidence="2">
    <location>
        <begin position="232"/>
        <end position="252"/>
    </location>
</feature>
<feature type="transmembrane region" description="Helical" evidence="2">
    <location>
        <begin position="262"/>
        <end position="282"/>
    </location>
</feature>
<feature type="transmembrane region" description="Helical" evidence="2">
    <location>
        <begin position="293"/>
        <end position="313"/>
    </location>
</feature>
<feature type="transmembrane region" description="Helical" evidence="2">
    <location>
        <begin position="324"/>
        <end position="344"/>
    </location>
</feature>
<keyword id="KW-0053">Apoptosis</keyword>
<keyword id="KW-1003">Cell membrane</keyword>
<keyword id="KW-0472">Membrane</keyword>
<keyword id="KW-0812">Transmembrane</keyword>
<keyword id="KW-1133">Transmembrane helix</keyword>
<dbReference type="EMBL" id="AY613957">
    <property type="protein sequence ID" value="AAU81654.1"/>
    <property type="molecule type" value="mRNA"/>
</dbReference>
<dbReference type="RefSeq" id="NP_001254570.1">
    <property type="nucleotide sequence ID" value="NM_001267641.1"/>
</dbReference>
<dbReference type="SMR" id="Q4VV71"/>
<dbReference type="FunCoup" id="Q4VV71">
    <property type="interactions" value="214"/>
</dbReference>
<dbReference type="STRING" id="69293.ENSGACP00000003106"/>
<dbReference type="GeneID" id="100174881"/>
<dbReference type="KEGG" id="gat:100174881"/>
<dbReference type="eggNOG" id="KOG4790">
    <property type="taxonomic scope" value="Eukaryota"/>
</dbReference>
<dbReference type="InParanoid" id="Q4VV71"/>
<dbReference type="GO" id="GO:0005886">
    <property type="term" value="C:plasma membrane"/>
    <property type="evidence" value="ECO:0000250"/>
    <property type="project" value="UniProtKB"/>
</dbReference>
<dbReference type="GO" id="GO:1902742">
    <property type="term" value="P:apoptotic process involved in development"/>
    <property type="evidence" value="ECO:0007669"/>
    <property type="project" value="TreeGrafter"/>
</dbReference>
<dbReference type="GO" id="GO:0043652">
    <property type="term" value="P:engulfment of apoptotic cell"/>
    <property type="evidence" value="ECO:0000250"/>
    <property type="project" value="UniProtKB"/>
</dbReference>
<dbReference type="GO" id="GO:0070782">
    <property type="term" value="P:phosphatidylserine exposure on apoptotic cell surface"/>
    <property type="evidence" value="ECO:0000250"/>
    <property type="project" value="UniProtKB"/>
</dbReference>
<dbReference type="InterPro" id="IPR018629">
    <property type="entry name" value="XK-rel"/>
</dbReference>
<dbReference type="InterPro" id="IPR050895">
    <property type="entry name" value="XK-related_scramblase"/>
</dbReference>
<dbReference type="PANTHER" id="PTHR16024">
    <property type="entry name" value="XK-RELATED PROTEIN"/>
    <property type="match status" value="1"/>
</dbReference>
<dbReference type="PANTHER" id="PTHR16024:SF8">
    <property type="entry name" value="XK-RELATED PROTEIN 8"/>
    <property type="match status" value="1"/>
</dbReference>
<dbReference type="Pfam" id="PF09815">
    <property type="entry name" value="XK-related"/>
    <property type="match status" value="1"/>
</dbReference>